<proteinExistence type="inferred from homology"/>
<evidence type="ECO:0000250" key="1"/>
<evidence type="ECO:0000255" key="2">
    <source>
        <dbReference type="PROSITE-ProRule" id="PRU00182"/>
    </source>
</evidence>
<evidence type="ECO:0000305" key="3"/>
<name>RSUA_PSEAE</name>
<protein>
    <recommendedName>
        <fullName>Ribosomal small subunit pseudouridine synthase A</fullName>
        <ecNumber>5.4.99.19</ecNumber>
    </recommendedName>
    <alternativeName>
        <fullName>16S pseudouridylate 516 synthase</fullName>
    </alternativeName>
    <alternativeName>
        <fullName>16S rRNA pseudouridine(516) synthase</fullName>
    </alternativeName>
    <alternativeName>
        <fullName>rRNA pseudouridylate synthase A</fullName>
    </alternativeName>
    <alternativeName>
        <fullName>rRNA-uridine isomerase A</fullName>
    </alternativeName>
</protein>
<gene>
    <name type="primary">rsuA</name>
    <name type="ordered locus">PA0733</name>
</gene>
<accession>Q9I5J6</accession>
<keyword id="KW-0413">Isomerase</keyword>
<keyword id="KW-1185">Reference proteome</keyword>
<keyword id="KW-0694">RNA-binding</keyword>
<keyword id="KW-0698">rRNA processing</keyword>
<feature type="chain" id="PRO_0000099971" description="Ribosomal small subunit pseudouridine synthase A">
    <location>
        <begin position="1"/>
        <end position="230"/>
    </location>
</feature>
<feature type="domain" description="S4 RNA-binding" evidence="2">
    <location>
        <begin position="1"/>
        <end position="68"/>
    </location>
</feature>
<feature type="active site" description="Nucleophile" evidence="1">
    <location>
        <position position="102"/>
    </location>
</feature>
<sequence>MRLDRFLANLPELSRRDAQMLIAGGHLRVDGQVVRDGTHEVRVFSRVELDERLLQAGKPARYYMLHKPMGCVSATRDPQHPTVLDLFPEDLRDDLHIGGRLDYNTTGLMLLTNDGQWSRRLTLPGSRRDKVYYVETEAPIDQRYVDAFAAGLHFRFEDLVTLPAQLEPIGPRCARLTLHEGRYHQVKRMFGHFDNKVLRLHRERMGDICLDPQLPPGAWRPLNAEEICSV</sequence>
<dbReference type="EC" id="5.4.99.19"/>
<dbReference type="EMBL" id="AE004091">
    <property type="protein sequence ID" value="AAG04122.1"/>
    <property type="molecule type" value="Genomic_DNA"/>
</dbReference>
<dbReference type="PIR" id="E83554">
    <property type="entry name" value="E83554"/>
</dbReference>
<dbReference type="RefSeq" id="NP_249424.1">
    <property type="nucleotide sequence ID" value="NC_002516.2"/>
</dbReference>
<dbReference type="RefSeq" id="WP_003114159.1">
    <property type="nucleotide sequence ID" value="NZ_QZGE01000007.1"/>
</dbReference>
<dbReference type="SMR" id="Q9I5J6"/>
<dbReference type="FunCoup" id="Q9I5J6">
    <property type="interactions" value="454"/>
</dbReference>
<dbReference type="STRING" id="208964.PA0733"/>
<dbReference type="PaxDb" id="208964-PA0733"/>
<dbReference type="DNASU" id="880710"/>
<dbReference type="GeneID" id="880710"/>
<dbReference type="KEGG" id="pae:PA0733"/>
<dbReference type="PATRIC" id="fig|208964.12.peg.760"/>
<dbReference type="PseudoCAP" id="PA0733"/>
<dbReference type="HOGENOM" id="CLU_024979_1_2_6"/>
<dbReference type="InParanoid" id="Q9I5J6"/>
<dbReference type="OrthoDB" id="9807213at2"/>
<dbReference type="PhylomeDB" id="Q9I5J6"/>
<dbReference type="BioCyc" id="PAER208964:G1FZ6-745-MONOMER"/>
<dbReference type="Proteomes" id="UP000002438">
    <property type="component" value="Chromosome"/>
</dbReference>
<dbReference type="GO" id="GO:0005829">
    <property type="term" value="C:cytosol"/>
    <property type="evidence" value="ECO:0000318"/>
    <property type="project" value="GO_Central"/>
</dbReference>
<dbReference type="GO" id="GO:0160136">
    <property type="term" value="F:16S rRNA pseudouridine(516) synthase activity"/>
    <property type="evidence" value="ECO:0007669"/>
    <property type="project" value="UniProtKB-EC"/>
</dbReference>
<dbReference type="GO" id="GO:0009982">
    <property type="term" value="F:pseudouridine synthase activity"/>
    <property type="evidence" value="ECO:0000318"/>
    <property type="project" value="GO_Central"/>
</dbReference>
<dbReference type="GO" id="GO:0003723">
    <property type="term" value="F:RNA binding"/>
    <property type="evidence" value="ECO:0007669"/>
    <property type="project" value="UniProtKB-KW"/>
</dbReference>
<dbReference type="GO" id="GO:0000455">
    <property type="term" value="P:enzyme-directed rRNA pseudouridine synthesis"/>
    <property type="evidence" value="ECO:0000318"/>
    <property type="project" value="GO_Central"/>
</dbReference>
<dbReference type="CDD" id="cd02553">
    <property type="entry name" value="PseudoU_synth_RsuA"/>
    <property type="match status" value="1"/>
</dbReference>
<dbReference type="CDD" id="cd00165">
    <property type="entry name" value="S4"/>
    <property type="match status" value="1"/>
</dbReference>
<dbReference type="FunFam" id="3.30.70.1560:FF:000001">
    <property type="entry name" value="Pseudouridine synthase"/>
    <property type="match status" value="1"/>
</dbReference>
<dbReference type="Gene3D" id="3.30.70.1560">
    <property type="entry name" value="Alpha-L RNA-binding motif"/>
    <property type="match status" value="1"/>
</dbReference>
<dbReference type="Gene3D" id="3.30.70.580">
    <property type="entry name" value="Pseudouridine synthase I, catalytic domain, N-terminal subdomain"/>
    <property type="match status" value="1"/>
</dbReference>
<dbReference type="Gene3D" id="3.10.290.10">
    <property type="entry name" value="RNA-binding S4 domain"/>
    <property type="match status" value="1"/>
</dbReference>
<dbReference type="InterPro" id="IPR042092">
    <property type="entry name" value="PsdUridine_s_RsuA/RluB/E/F_cat"/>
</dbReference>
<dbReference type="InterPro" id="IPR020103">
    <property type="entry name" value="PsdUridine_synth_cat_dom_sf"/>
</dbReference>
<dbReference type="InterPro" id="IPR006145">
    <property type="entry name" value="PsdUridine_synth_RsuA/RluA"/>
</dbReference>
<dbReference type="InterPro" id="IPR000748">
    <property type="entry name" value="PsdUridine_synth_RsuA/RluB/E/F"/>
</dbReference>
<dbReference type="InterPro" id="IPR018496">
    <property type="entry name" value="PsdUridine_synth_RsuA/RluB_CS"/>
</dbReference>
<dbReference type="InterPro" id="IPR050343">
    <property type="entry name" value="RsuA_PseudoU_synthase"/>
</dbReference>
<dbReference type="InterPro" id="IPR002942">
    <property type="entry name" value="S4_RNA-bd"/>
</dbReference>
<dbReference type="InterPro" id="IPR036986">
    <property type="entry name" value="S4_RNA-bd_sf"/>
</dbReference>
<dbReference type="InterPro" id="IPR020094">
    <property type="entry name" value="TruA/RsuA/RluB/E/F_N"/>
</dbReference>
<dbReference type="NCBIfam" id="TIGR00093">
    <property type="entry name" value="pseudouridine synthase"/>
    <property type="match status" value="1"/>
</dbReference>
<dbReference type="PANTHER" id="PTHR47683:SF4">
    <property type="entry name" value="PSEUDOURIDINE SYNTHASE"/>
    <property type="match status" value="1"/>
</dbReference>
<dbReference type="PANTHER" id="PTHR47683">
    <property type="entry name" value="PSEUDOURIDINE SYNTHASE FAMILY PROTEIN-RELATED"/>
    <property type="match status" value="1"/>
</dbReference>
<dbReference type="Pfam" id="PF00849">
    <property type="entry name" value="PseudoU_synth_2"/>
    <property type="match status" value="1"/>
</dbReference>
<dbReference type="Pfam" id="PF01479">
    <property type="entry name" value="S4"/>
    <property type="match status" value="1"/>
</dbReference>
<dbReference type="SMART" id="SM00363">
    <property type="entry name" value="S4"/>
    <property type="match status" value="1"/>
</dbReference>
<dbReference type="SUPFAM" id="SSF55174">
    <property type="entry name" value="Alpha-L RNA-binding motif"/>
    <property type="match status" value="1"/>
</dbReference>
<dbReference type="SUPFAM" id="SSF55120">
    <property type="entry name" value="Pseudouridine synthase"/>
    <property type="match status" value="1"/>
</dbReference>
<dbReference type="PROSITE" id="PS01149">
    <property type="entry name" value="PSI_RSU"/>
    <property type="match status" value="1"/>
</dbReference>
<dbReference type="PROSITE" id="PS50889">
    <property type="entry name" value="S4"/>
    <property type="match status" value="1"/>
</dbReference>
<comment type="function">
    <text evidence="1">Responsible for synthesis of pseudouridine from uracil-516 in 16S ribosomal RNA.</text>
</comment>
<comment type="catalytic activity">
    <reaction>
        <text>uridine(516) in 16S rRNA = pseudouridine(516) in 16S rRNA</text>
        <dbReference type="Rhea" id="RHEA:38867"/>
        <dbReference type="Rhea" id="RHEA-COMP:10089"/>
        <dbReference type="Rhea" id="RHEA-COMP:10090"/>
        <dbReference type="ChEBI" id="CHEBI:65314"/>
        <dbReference type="ChEBI" id="CHEBI:65315"/>
        <dbReference type="EC" id="5.4.99.19"/>
    </reaction>
</comment>
<comment type="similarity">
    <text evidence="3">Belongs to the pseudouridine synthase RsuA family.</text>
</comment>
<organism>
    <name type="scientific">Pseudomonas aeruginosa (strain ATCC 15692 / DSM 22644 / CIP 104116 / JCM 14847 / LMG 12228 / 1C / PRS 101 / PAO1)</name>
    <dbReference type="NCBI Taxonomy" id="208964"/>
    <lineage>
        <taxon>Bacteria</taxon>
        <taxon>Pseudomonadati</taxon>
        <taxon>Pseudomonadota</taxon>
        <taxon>Gammaproteobacteria</taxon>
        <taxon>Pseudomonadales</taxon>
        <taxon>Pseudomonadaceae</taxon>
        <taxon>Pseudomonas</taxon>
    </lineage>
</organism>
<reference key="1">
    <citation type="journal article" date="2000" name="Nature">
        <title>Complete genome sequence of Pseudomonas aeruginosa PAO1, an opportunistic pathogen.</title>
        <authorList>
            <person name="Stover C.K."/>
            <person name="Pham X.-Q.T."/>
            <person name="Erwin A.L."/>
            <person name="Mizoguchi S.D."/>
            <person name="Warrener P."/>
            <person name="Hickey M.J."/>
            <person name="Brinkman F.S.L."/>
            <person name="Hufnagle W.O."/>
            <person name="Kowalik D.J."/>
            <person name="Lagrou M."/>
            <person name="Garber R.L."/>
            <person name="Goltry L."/>
            <person name="Tolentino E."/>
            <person name="Westbrock-Wadman S."/>
            <person name="Yuan Y."/>
            <person name="Brody L.L."/>
            <person name="Coulter S.N."/>
            <person name="Folger K.R."/>
            <person name="Kas A."/>
            <person name="Larbig K."/>
            <person name="Lim R.M."/>
            <person name="Smith K.A."/>
            <person name="Spencer D.H."/>
            <person name="Wong G.K.-S."/>
            <person name="Wu Z."/>
            <person name="Paulsen I.T."/>
            <person name="Reizer J."/>
            <person name="Saier M.H. Jr."/>
            <person name="Hancock R.E.W."/>
            <person name="Lory S."/>
            <person name="Olson M.V."/>
        </authorList>
    </citation>
    <scope>NUCLEOTIDE SEQUENCE [LARGE SCALE GENOMIC DNA]</scope>
    <source>
        <strain>ATCC 15692 / DSM 22644 / CIP 104116 / JCM 14847 / LMG 12228 / 1C / PRS 101 / PAO1</strain>
    </source>
</reference>